<keyword id="KW-0007">Acetylation</keyword>
<keyword id="KW-0158">Chromosome</keyword>
<keyword id="KW-0238">DNA-binding</keyword>
<keyword id="KW-1017">Isopeptide bond</keyword>
<keyword id="KW-0544">Nucleosome core</keyword>
<keyword id="KW-0539">Nucleus</keyword>
<keyword id="KW-1185">Reference proteome</keyword>
<keyword id="KW-0832">Ubl conjugation</keyword>
<sequence length="141" mass="14972">MAPKAAEKKPSTGGKAPAGGKAPAEKKEAGKKTAAAASGDKKKRGKTRKETYSSYIYKVLKQVHPDTGISTRAMSILNSFVNDIFERVATEASKLAAYNKKSTISSREIQTSVRLILPGELAKHAVSEGTKAVTKYSSSAK</sequence>
<reference key="1">
    <citation type="journal article" date="2005" name="Nature">
        <title>Genome sequencing and analysis of Aspergillus oryzae.</title>
        <authorList>
            <person name="Machida M."/>
            <person name="Asai K."/>
            <person name="Sano M."/>
            <person name="Tanaka T."/>
            <person name="Kumagai T."/>
            <person name="Terai G."/>
            <person name="Kusumoto K."/>
            <person name="Arima T."/>
            <person name="Akita O."/>
            <person name="Kashiwagi Y."/>
            <person name="Abe K."/>
            <person name="Gomi K."/>
            <person name="Horiuchi H."/>
            <person name="Kitamoto K."/>
            <person name="Kobayashi T."/>
            <person name="Takeuchi M."/>
            <person name="Denning D.W."/>
            <person name="Galagan J.E."/>
            <person name="Nierman W.C."/>
            <person name="Yu J."/>
            <person name="Archer D.B."/>
            <person name="Bennett J.W."/>
            <person name="Bhatnagar D."/>
            <person name="Cleveland T.E."/>
            <person name="Fedorova N.D."/>
            <person name="Gotoh O."/>
            <person name="Horikawa H."/>
            <person name="Hosoyama A."/>
            <person name="Ichinomiya M."/>
            <person name="Igarashi R."/>
            <person name="Iwashita K."/>
            <person name="Juvvadi P.R."/>
            <person name="Kato M."/>
            <person name="Kato Y."/>
            <person name="Kin T."/>
            <person name="Kokubun A."/>
            <person name="Maeda H."/>
            <person name="Maeyama N."/>
            <person name="Maruyama J."/>
            <person name="Nagasaki H."/>
            <person name="Nakajima T."/>
            <person name="Oda K."/>
            <person name="Okada K."/>
            <person name="Paulsen I."/>
            <person name="Sakamoto K."/>
            <person name="Sawano T."/>
            <person name="Takahashi M."/>
            <person name="Takase K."/>
            <person name="Terabayashi Y."/>
            <person name="Wortman J.R."/>
            <person name="Yamada O."/>
            <person name="Yamagata Y."/>
            <person name="Anazawa H."/>
            <person name="Hata Y."/>
            <person name="Koide Y."/>
            <person name="Komori T."/>
            <person name="Koyama Y."/>
            <person name="Minetoki T."/>
            <person name="Suharnan S."/>
            <person name="Tanaka A."/>
            <person name="Isono K."/>
            <person name="Kuhara S."/>
            <person name="Ogasawara N."/>
            <person name="Kikuchi H."/>
        </authorList>
    </citation>
    <scope>NUCLEOTIDE SEQUENCE [LARGE SCALE GENOMIC DNA]</scope>
    <source>
        <strain>ATCC 42149 / RIB 40</strain>
    </source>
</reference>
<comment type="function">
    <text>Core component of nucleosome. Nucleosomes wrap and compact DNA into chromatin, limiting DNA accessibility to the cellular machineries which require DNA as a template. Histones thereby play a central role in transcription regulation, DNA repair, DNA replication and chromosomal stability. DNA accessibility is regulated via a complex set of post-translational modifications of histones, also called histone code, and nucleosome remodeling.</text>
</comment>
<comment type="subunit">
    <text>The nucleosome is a histone octamer containing two molecules each of H2A, H2B, H3 and H4 assembled in one H3-H4 heterotetramer and two H2A-H2B heterodimers. The octamer wraps approximately 147 bp of DNA.</text>
</comment>
<comment type="subcellular location">
    <subcellularLocation>
        <location evidence="1">Nucleus</location>
    </subcellularLocation>
    <subcellularLocation>
        <location evidence="1">Chromosome</location>
    </subcellularLocation>
</comment>
<comment type="PTM">
    <text evidence="1">Monoubiquitinated by the ubc2-bre1 complex to form H2BK123ub1. H2BK123ub1 gives a specific tag for epigenetic transcriptional activation and is also prerequisite for H3K4me and H3K79me formation. H2BK123ub1 also modulates the formation of double-strand breaks during meiosis and is a prerequisite for DNA-damage checkpoint activation (By similarity).</text>
</comment>
<comment type="PTM">
    <text evidence="1">Acetylated by gcn5 to form H2BK11ac and H2BK16ac. H2BK16ac can also be formed by esa1. Acetylation of N-terminal lysines and particularly formation of H2BK11acK16ac has a positive effect on transcription (By similarity).</text>
</comment>
<comment type="PTM">
    <text evidence="1">Sumoylation to form H2BK6su or H2BK7su, and probably also H2BK16su or H2BK17su, occurs preferentially near the telomeres and represses gene transcription.</text>
</comment>
<comment type="similarity">
    <text evidence="3">Belongs to the histone H2B family.</text>
</comment>
<comment type="caution">
    <text evidence="3">To ensure consistency between histone entries, we follow the 'Brno' nomenclature for histone modifications, with positions referring to those used in the literature for the 'closest' model organism. Due to slight variations in histone sequences between organisms and to the presence of initiator methionine in UniProtKB/Swiss-Prot sequences, the actual positions of modified amino acids in the sequence generally differ. In this entry the following conventions are used: H2BK6ac = acetylated Lys-8; H2BK6su = sumoylated Lys-8; H2BK7ac = acetylated Lys-9; H2BK7su = sumoylated Lys-9; H2BK11ac = acetylated Lys-15; H2BK16ac = acetylated Lys-26; H2BK16su = sumoylated Lys-26; H2BK17su = sumoylated Lys-27; H2BK123ub1 = monoubiquitinated Lys-135.</text>
</comment>
<comment type="sequence caution" evidence="3">
    <conflict type="erroneous gene model prediction">
        <sequence resource="EMBL-CDS" id="BAE63256"/>
    </conflict>
</comment>
<protein>
    <recommendedName>
        <fullName>Histone H2B</fullName>
    </recommendedName>
</protein>
<proteinExistence type="inferred from homology"/>
<gene>
    <name type="primary">htb1</name>
    <name type="ORF">AO090020000006</name>
</gene>
<accession>Q2U5A9</accession>
<name>H2B_ASPOR</name>
<feature type="initiator methionine" description="Removed" evidence="1">
    <location>
        <position position="1"/>
    </location>
</feature>
<feature type="chain" id="PRO_0000245292" description="Histone H2B">
    <location>
        <begin position="2"/>
        <end position="141"/>
    </location>
</feature>
<feature type="region of interest" description="Disordered" evidence="2">
    <location>
        <begin position="1"/>
        <end position="49"/>
    </location>
</feature>
<feature type="compositionally biased region" description="Basic and acidic residues" evidence="2">
    <location>
        <begin position="1"/>
        <end position="10"/>
    </location>
</feature>
<feature type="compositionally biased region" description="Low complexity" evidence="2">
    <location>
        <begin position="11"/>
        <end position="22"/>
    </location>
</feature>
<feature type="modified residue" description="N6-acetyllysine; alternate" evidence="1">
    <location>
        <position position="8"/>
    </location>
</feature>
<feature type="modified residue" description="N6-acetyllysine; alternate" evidence="1">
    <location>
        <position position="9"/>
    </location>
</feature>
<feature type="modified residue" description="N6-acetyllysine" evidence="1">
    <location>
        <position position="15"/>
    </location>
</feature>
<feature type="modified residue" description="N6-acetyllysine; alternate" evidence="1">
    <location>
        <position position="26"/>
    </location>
</feature>
<feature type="cross-link" description="Glycyl lysine isopeptide (Lys-Gly) (interchain with G-Cter in SUMO); alternate" evidence="1">
    <location>
        <position position="8"/>
    </location>
</feature>
<feature type="cross-link" description="Glycyl lysine isopeptide (Lys-Gly) (interchain with G-Cter in SUMO); alternate" evidence="1">
    <location>
        <position position="9"/>
    </location>
</feature>
<feature type="cross-link" description="Glycyl lysine isopeptide (Lys-Gly) (interchain with G-Cter in SUMO); alternate" evidence="1">
    <location>
        <position position="26"/>
    </location>
</feature>
<feature type="cross-link" description="Glycyl lysine isopeptide (Lys-Gly) (interchain with G-Cter in SUMO)" evidence="1">
    <location>
        <position position="27"/>
    </location>
</feature>
<feature type="cross-link" description="Glycyl lysine isopeptide (Lys-Gly) (interchain with G-Cter in ubiquitin)" evidence="1">
    <location>
        <position position="135"/>
    </location>
</feature>
<dbReference type="EMBL" id="BA000054">
    <property type="protein sequence ID" value="BAE63256.1"/>
    <property type="status" value="ALT_SEQ"/>
    <property type="molecule type" value="Genomic_DNA"/>
</dbReference>
<dbReference type="RefSeq" id="XP_001824389.2">
    <property type="nucleotide sequence ID" value="XM_001824337.2"/>
</dbReference>
<dbReference type="SMR" id="Q2U5A9"/>
<dbReference type="STRING" id="510516.Q2U5A9"/>
<dbReference type="VEuPathDB" id="FungiDB:AO090020000006"/>
<dbReference type="OMA" id="FCPFAIR"/>
<dbReference type="Proteomes" id="UP000006564">
    <property type="component" value="Chromosome 6"/>
</dbReference>
<dbReference type="GO" id="GO:0000786">
    <property type="term" value="C:nucleosome"/>
    <property type="evidence" value="ECO:0007669"/>
    <property type="project" value="UniProtKB-KW"/>
</dbReference>
<dbReference type="GO" id="GO:0005634">
    <property type="term" value="C:nucleus"/>
    <property type="evidence" value="ECO:0007669"/>
    <property type="project" value="UniProtKB-SubCell"/>
</dbReference>
<dbReference type="GO" id="GO:0003677">
    <property type="term" value="F:DNA binding"/>
    <property type="evidence" value="ECO:0007669"/>
    <property type="project" value="UniProtKB-KW"/>
</dbReference>
<dbReference type="GO" id="GO:0046982">
    <property type="term" value="F:protein heterodimerization activity"/>
    <property type="evidence" value="ECO:0007669"/>
    <property type="project" value="InterPro"/>
</dbReference>
<dbReference type="GO" id="GO:0030527">
    <property type="term" value="F:structural constituent of chromatin"/>
    <property type="evidence" value="ECO:0007669"/>
    <property type="project" value="InterPro"/>
</dbReference>
<dbReference type="CDD" id="cd22910">
    <property type="entry name" value="HFD_H2B"/>
    <property type="match status" value="1"/>
</dbReference>
<dbReference type="FunFam" id="1.10.20.10:FF:000014">
    <property type="entry name" value="Histone H2B"/>
    <property type="match status" value="1"/>
</dbReference>
<dbReference type="Gene3D" id="1.10.20.10">
    <property type="entry name" value="Histone, subunit A"/>
    <property type="match status" value="1"/>
</dbReference>
<dbReference type="InterPro" id="IPR009072">
    <property type="entry name" value="Histone-fold"/>
</dbReference>
<dbReference type="InterPro" id="IPR007125">
    <property type="entry name" value="Histone_H2A/H2B/H3"/>
</dbReference>
<dbReference type="InterPro" id="IPR000558">
    <property type="entry name" value="Histone_H2B"/>
</dbReference>
<dbReference type="InterPro" id="IPR055333">
    <property type="entry name" value="HISTONE_H2B_site"/>
</dbReference>
<dbReference type="PANTHER" id="PTHR23428">
    <property type="entry name" value="HISTONE H2B"/>
    <property type="match status" value="1"/>
</dbReference>
<dbReference type="Pfam" id="PF00125">
    <property type="entry name" value="Histone"/>
    <property type="match status" value="1"/>
</dbReference>
<dbReference type="PRINTS" id="PR00621">
    <property type="entry name" value="HISTONEH2B"/>
</dbReference>
<dbReference type="SMART" id="SM00427">
    <property type="entry name" value="H2B"/>
    <property type="match status" value="1"/>
</dbReference>
<dbReference type="SUPFAM" id="SSF47113">
    <property type="entry name" value="Histone-fold"/>
    <property type="match status" value="1"/>
</dbReference>
<dbReference type="PROSITE" id="PS00357">
    <property type="entry name" value="HISTONE_H2B"/>
    <property type="match status" value="1"/>
</dbReference>
<evidence type="ECO:0000250" key="1"/>
<evidence type="ECO:0000256" key="2">
    <source>
        <dbReference type="SAM" id="MobiDB-lite"/>
    </source>
</evidence>
<evidence type="ECO:0000305" key="3"/>
<organism>
    <name type="scientific">Aspergillus oryzae (strain ATCC 42149 / RIB 40)</name>
    <name type="common">Yellow koji mold</name>
    <dbReference type="NCBI Taxonomy" id="510516"/>
    <lineage>
        <taxon>Eukaryota</taxon>
        <taxon>Fungi</taxon>
        <taxon>Dikarya</taxon>
        <taxon>Ascomycota</taxon>
        <taxon>Pezizomycotina</taxon>
        <taxon>Eurotiomycetes</taxon>
        <taxon>Eurotiomycetidae</taxon>
        <taxon>Eurotiales</taxon>
        <taxon>Aspergillaceae</taxon>
        <taxon>Aspergillus</taxon>
        <taxon>Aspergillus subgen. Circumdati</taxon>
    </lineage>
</organism>